<keyword id="KW-0012">Acyltransferase</keyword>
<keyword id="KW-0963">Cytoplasm</keyword>
<keyword id="KW-0275">Fatty acid biosynthesis</keyword>
<keyword id="KW-0276">Fatty acid metabolism</keyword>
<keyword id="KW-0444">Lipid biosynthesis</keyword>
<keyword id="KW-0443">Lipid metabolism</keyword>
<keyword id="KW-0511">Multifunctional enzyme</keyword>
<keyword id="KW-0808">Transferase</keyword>
<proteinExistence type="inferred from homology"/>
<protein>
    <recommendedName>
        <fullName evidence="1">Beta-ketoacyl-[acyl-carrier-protein] synthase III 1</fullName>
        <shortName evidence="1">Beta-ketoacyl-ACP synthase III 1</shortName>
        <shortName evidence="1">KAS III 1</shortName>
        <ecNumber evidence="1">2.3.1.180</ecNumber>
    </recommendedName>
    <alternativeName>
        <fullName evidence="1">3-oxoacyl-[acyl-carrier-protein] synthase 3 1</fullName>
    </alternativeName>
    <alternativeName>
        <fullName evidence="1">3-oxoacyl-[acyl-carrier-protein] synthase III 1</fullName>
    </alternativeName>
</protein>
<gene>
    <name evidence="1" type="primary">fabH1</name>
    <name type="ordered locus">VP2056</name>
</gene>
<feature type="chain" id="PRO_0000110504" description="Beta-ketoacyl-[acyl-carrier-protein] synthase III 1">
    <location>
        <begin position="1"/>
        <end position="316"/>
    </location>
</feature>
<feature type="region of interest" description="ACP-binding" evidence="1">
    <location>
        <begin position="244"/>
        <end position="248"/>
    </location>
</feature>
<feature type="active site" evidence="1">
    <location>
        <position position="112"/>
    </location>
</feature>
<feature type="active site" evidence="1">
    <location>
        <position position="243"/>
    </location>
</feature>
<feature type="active site" evidence="1">
    <location>
        <position position="273"/>
    </location>
</feature>
<organism>
    <name type="scientific">Vibrio parahaemolyticus serotype O3:K6 (strain RIMD 2210633)</name>
    <dbReference type="NCBI Taxonomy" id="223926"/>
    <lineage>
        <taxon>Bacteria</taxon>
        <taxon>Pseudomonadati</taxon>
        <taxon>Pseudomonadota</taxon>
        <taxon>Gammaproteobacteria</taxon>
        <taxon>Vibrionales</taxon>
        <taxon>Vibrionaceae</taxon>
        <taxon>Vibrio</taxon>
    </lineage>
</organism>
<comment type="function">
    <text evidence="1">Catalyzes the condensation reaction of fatty acid synthesis by the addition to an acyl acceptor of two carbons from malonyl-ACP. Catalyzes the first condensation reaction which initiates fatty acid synthesis and may therefore play a role in governing the total rate of fatty acid production. Possesses both acetoacetyl-ACP synthase and acetyl transacylase activities. Its substrate specificity determines the biosynthesis of branched-chain and/or straight-chain of fatty acids.</text>
</comment>
<comment type="catalytic activity">
    <reaction evidence="1">
        <text>malonyl-[ACP] + acetyl-CoA + H(+) = 3-oxobutanoyl-[ACP] + CO2 + CoA</text>
        <dbReference type="Rhea" id="RHEA:12080"/>
        <dbReference type="Rhea" id="RHEA-COMP:9623"/>
        <dbReference type="Rhea" id="RHEA-COMP:9625"/>
        <dbReference type="ChEBI" id="CHEBI:15378"/>
        <dbReference type="ChEBI" id="CHEBI:16526"/>
        <dbReference type="ChEBI" id="CHEBI:57287"/>
        <dbReference type="ChEBI" id="CHEBI:57288"/>
        <dbReference type="ChEBI" id="CHEBI:78449"/>
        <dbReference type="ChEBI" id="CHEBI:78450"/>
        <dbReference type="EC" id="2.3.1.180"/>
    </reaction>
</comment>
<comment type="pathway">
    <text evidence="1">Lipid metabolism; fatty acid biosynthesis.</text>
</comment>
<comment type="subunit">
    <text evidence="1">Homodimer.</text>
</comment>
<comment type="subcellular location">
    <subcellularLocation>
        <location evidence="1">Cytoplasm</location>
    </subcellularLocation>
</comment>
<comment type="domain">
    <text evidence="1">The last Arg residue of the ACP-binding site is essential for the weak association between ACP/AcpP and FabH.</text>
</comment>
<comment type="similarity">
    <text evidence="1">Belongs to the thiolase-like superfamily. FabH family.</text>
</comment>
<name>FABH1_VIBPA</name>
<sequence>MYSKILGTGSYLPSQVRTNADLEKMVDTSDEWIVARTGIKERRIAAEDETVADMAFYAAENAIDMAGIDKNDIDLIIVATTSSSHTFPSSACQVQAKLGIKGCPAFDLAAACSGFVYALSVADQHIKSGMCKNVLVIGADALSKTCDPTDRSTIILFGDGAGAVVVGASQEPGIISTHIYADGQFGDLLSLPVPERGKDVDKWLHMAGNEVFKVAVTQLSKLVKDTLEANDMHKSELDWLVPHQANYRIISATAKKLSMSLDQVVVTLDRHGNTSAATVPTALDEAVRDGRIKRGQTLLLEAFGGGFTWGSALVKF</sequence>
<reference key="1">
    <citation type="journal article" date="2003" name="Lancet">
        <title>Genome sequence of Vibrio parahaemolyticus: a pathogenic mechanism distinct from that of V. cholerae.</title>
        <authorList>
            <person name="Makino K."/>
            <person name="Oshima K."/>
            <person name="Kurokawa K."/>
            <person name="Yokoyama K."/>
            <person name="Uda T."/>
            <person name="Tagomori K."/>
            <person name="Iijima Y."/>
            <person name="Najima M."/>
            <person name="Nakano M."/>
            <person name="Yamashita A."/>
            <person name="Kubota Y."/>
            <person name="Kimura S."/>
            <person name="Yasunaga T."/>
            <person name="Honda T."/>
            <person name="Shinagawa H."/>
            <person name="Hattori M."/>
            <person name="Iida T."/>
        </authorList>
    </citation>
    <scope>NUCLEOTIDE SEQUENCE [LARGE SCALE GENOMIC DNA]</scope>
    <source>
        <strain>RIMD 2210633</strain>
    </source>
</reference>
<evidence type="ECO:0000255" key="1">
    <source>
        <dbReference type="HAMAP-Rule" id="MF_01815"/>
    </source>
</evidence>
<accession>Q87N20</accession>
<dbReference type="EC" id="2.3.1.180" evidence="1"/>
<dbReference type="EMBL" id="BA000031">
    <property type="protein sequence ID" value="BAC60319.1"/>
    <property type="molecule type" value="Genomic_DNA"/>
</dbReference>
<dbReference type="RefSeq" id="NP_798435.1">
    <property type="nucleotide sequence ID" value="NC_004603.1"/>
</dbReference>
<dbReference type="RefSeq" id="WP_005490641.1">
    <property type="nucleotide sequence ID" value="NC_004603.1"/>
</dbReference>
<dbReference type="SMR" id="Q87N20"/>
<dbReference type="GeneID" id="1189567"/>
<dbReference type="KEGG" id="vpa:VP2056"/>
<dbReference type="PATRIC" id="fig|223926.6.peg.1966"/>
<dbReference type="eggNOG" id="COG0332">
    <property type="taxonomic scope" value="Bacteria"/>
</dbReference>
<dbReference type="HOGENOM" id="CLU_039592_4_1_6"/>
<dbReference type="UniPathway" id="UPA00094"/>
<dbReference type="Proteomes" id="UP000002493">
    <property type="component" value="Chromosome 1"/>
</dbReference>
<dbReference type="GO" id="GO:0005737">
    <property type="term" value="C:cytoplasm"/>
    <property type="evidence" value="ECO:0007669"/>
    <property type="project" value="UniProtKB-SubCell"/>
</dbReference>
<dbReference type="GO" id="GO:0004315">
    <property type="term" value="F:3-oxoacyl-[acyl-carrier-protein] synthase activity"/>
    <property type="evidence" value="ECO:0007669"/>
    <property type="project" value="InterPro"/>
</dbReference>
<dbReference type="GO" id="GO:0033818">
    <property type="term" value="F:beta-ketoacyl-acyl-carrier-protein synthase III activity"/>
    <property type="evidence" value="ECO:0007669"/>
    <property type="project" value="UniProtKB-UniRule"/>
</dbReference>
<dbReference type="GO" id="GO:0006633">
    <property type="term" value="P:fatty acid biosynthetic process"/>
    <property type="evidence" value="ECO:0007669"/>
    <property type="project" value="UniProtKB-UniRule"/>
</dbReference>
<dbReference type="CDD" id="cd00830">
    <property type="entry name" value="KAS_III"/>
    <property type="match status" value="1"/>
</dbReference>
<dbReference type="FunFam" id="3.40.47.10:FF:000004">
    <property type="entry name" value="3-oxoacyl-[acyl-carrier-protein] synthase 3"/>
    <property type="match status" value="1"/>
</dbReference>
<dbReference type="Gene3D" id="3.40.47.10">
    <property type="match status" value="1"/>
</dbReference>
<dbReference type="HAMAP" id="MF_01815">
    <property type="entry name" value="FabH"/>
    <property type="match status" value="1"/>
</dbReference>
<dbReference type="InterPro" id="IPR013747">
    <property type="entry name" value="ACP_syn_III_C"/>
</dbReference>
<dbReference type="InterPro" id="IPR013751">
    <property type="entry name" value="ACP_syn_III_N"/>
</dbReference>
<dbReference type="InterPro" id="IPR004655">
    <property type="entry name" value="FabH"/>
</dbReference>
<dbReference type="InterPro" id="IPR016039">
    <property type="entry name" value="Thiolase-like"/>
</dbReference>
<dbReference type="NCBIfam" id="TIGR00747">
    <property type="entry name" value="fabH"/>
    <property type="match status" value="1"/>
</dbReference>
<dbReference type="NCBIfam" id="NF006829">
    <property type="entry name" value="PRK09352.1"/>
    <property type="match status" value="1"/>
</dbReference>
<dbReference type="PANTHER" id="PTHR43091">
    <property type="entry name" value="3-OXOACYL-[ACYL-CARRIER-PROTEIN] SYNTHASE"/>
    <property type="match status" value="1"/>
</dbReference>
<dbReference type="PANTHER" id="PTHR43091:SF1">
    <property type="entry name" value="BETA-KETOACYL-[ACYL-CARRIER-PROTEIN] SYNTHASE III, CHLOROPLASTIC"/>
    <property type="match status" value="1"/>
</dbReference>
<dbReference type="Pfam" id="PF08545">
    <property type="entry name" value="ACP_syn_III"/>
    <property type="match status" value="1"/>
</dbReference>
<dbReference type="Pfam" id="PF08541">
    <property type="entry name" value="ACP_syn_III_C"/>
    <property type="match status" value="1"/>
</dbReference>
<dbReference type="SUPFAM" id="SSF53901">
    <property type="entry name" value="Thiolase-like"/>
    <property type="match status" value="1"/>
</dbReference>